<accession>Q2IBF8</accession>
<reference key="1">
    <citation type="submission" date="2005-11" db="EMBL/GenBank/DDBJ databases">
        <title>NISC comparative sequencing initiative.</title>
        <authorList>
            <person name="Antonellis A."/>
            <person name="Ayele K."/>
            <person name="Benjamin B."/>
            <person name="Blakesley R.W."/>
            <person name="Boakye A."/>
            <person name="Bouffard G.G."/>
            <person name="Brinkley C."/>
            <person name="Brooks S."/>
            <person name="Chu G."/>
            <person name="Coleman H."/>
            <person name="Engle J."/>
            <person name="Gestole M."/>
            <person name="Greene A."/>
            <person name="Guan X."/>
            <person name="Gupta J."/>
            <person name="Haghighi P."/>
            <person name="Han J."/>
            <person name="Hansen N."/>
            <person name="Ho S.-L."/>
            <person name="Hu P."/>
            <person name="Hunter G."/>
            <person name="Hurle B."/>
            <person name="Idol J.R."/>
            <person name="Kwong P."/>
            <person name="Laric P."/>
            <person name="Larson S."/>
            <person name="Lee-Lin S.-Q."/>
            <person name="Legaspi R."/>
            <person name="Madden M."/>
            <person name="Maduro Q.L."/>
            <person name="Maduro V.B."/>
            <person name="Margulies E.H."/>
            <person name="Masiello C."/>
            <person name="Maskeri B."/>
            <person name="McDowell J."/>
            <person name="Mojidi H.A."/>
            <person name="Mullikin J.C."/>
            <person name="Oestreicher J.S."/>
            <person name="Park M."/>
            <person name="Portnoy M.E."/>
            <person name="Prasad A."/>
            <person name="Puri O."/>
            <person name="Reddix-Dugue N."/>
            <person name="Schandler K."/>
            <person name="Schueler M.G."/>
            <person name="Sison C."/>
            <person name="Stantripop S."/>
            <person name="Stephen E."/>
            <person name="Taye A."/>
            <person name="Thomas J.W."/>
            <person name="Thomas P.J."/>
            <person name="Tsipouri V."/>
            <person name="Ung L."/>
            <person name="Vogt J.L."/>
            <person name="Wetherby K.D."/>
            <person name="Young A."/>
            <person name="Green E.D."/>
        </authorList>
    </citation>
    <scope>NUCLEOTIDE SEQUENCE [LARGE SCALE GENOMIC DNA]</scope>
</reference>
<organism>
    <name type="scientific">Eulemur macaco macaco</name>
    <name type="common">Black lemur</name>
    <dbReference type="NCBI Taxonomy" id="30603"/>
    <lineage>
        <taxon>Eukaryota</taxon>
        <taxon>Metazoa</taxon>
        <taxon>Chordata</taxon>
        <taxon>Craniata</taxon>
        <taxon>Vertebrata</taxon>
        <taxon>Euteleostomi</taxon>
        <taxon>Mammalia</taxon>
        <taxon>Eutheria</taxon>
        <taxon>Euarchontoglires</taxon>
        <taxon>Primates</taxon>
        <taxon>Strepsirrhini</taxon>
        <taxon>Lemuriformes</taxon>
        <taxon>Lemuridae</taxon>
        <taxon>Eulemur</taxon>
    </lineage>
</organism>
<sequence>MATDGASCEPDASRAPEEAAGATAEAARKEFDVDTLSKSELRMLLSVMEGELEARDLVIEALRARRKEVFIQERYGRFNLNDPFLALQRDYEAGAGDKEKKPVCTNPLSILEAVMAHCRKMQERMSTQLAAAESRQKKLEMEKLQLQALEQEHKKLAARLEEERGKNKQVVLMLVKECKQLSGKVIEEAQKLEEVMAKLEEEKKKTNELEEELSAEKRRSTEMEAQMEKQLSEFDTEREQLRAKLNREEAHTTDLKEEIDKMKKMIEQLKRGSDSKPSLSLPRKTKDRRSVSISVGTEGPLTRSVACQTDLAVESTEHVKKSPLTVPVKPSPGSAKGSVGANAALVRPGIDRQASHGDLIGASLPTVPPASANRIEENGPSTGSPPDLTSSAAQSPAAAPHGLPPAHGSQSGSQSPCASAPPHSAPPHPGLNPRVQAARFRFQGNANDPDQNGNTTQSPPSRDVSPTSRDNLVAKQLARNTVTQALSRFTSPPVGAAPRPGASPTGDVGAHPPVGRTSLKTPGVARVDRGNPPPIPPKKPGLSQTPSPPHPQLKVIMDSSRASNAGAKVDNKTVASSPPSSLPQGNRVISEENLPKSSSPQLPPKPSIDLTVAPAGCAVSALATSQVGAWPAETPGLNQPACSGSSLVIPTTTAFRSSINPVSASSCRPGASDSLLVTASGWSPSLTPLLMSGGPAPLAGRPTLLQQAAAQGNVTLLSMLLNEEGLDINYSCEDGHSALYSAAKNGHTDCVRLLLNAEAQVNAADKNGFTPLCAAAAQGHFECVELLIAYDAHINHAADGGQTPLYLACKNGNKECIKLLLEAGTDRSVKTRDGWTPVHAAVDTGNVDSLKLLMYHGAPAHGNSLNEEEPESDASDLDEGEESSEGKSKPVVPADLINHADREGWTAAHIAASKGFKNCLEILCRHRGLEPERRDKCNRTVHDVATDDCKHLLENLNALKIPLRISVGEIQPGNYGSNDFECENTICALHIRKQTSWDDFSKAVSQALTNHFQAISSDGWWSLEDTAFNNTADSDIGLSTSSVRAIMLGSVPWSAGQSLAQSPWDFMRKTKAEQVTVLLSGPQEGCLSSVTYTSMIPLQMLQNYLRLVEQYHNVIFHGPEGSLQDYIVHQLALCLKHRQMAAGFSCEIVSAEVDAGFSKEQLVDLFISSACLIPVKQSPVKKKIIIILENLEKSSLSELLGDFLAPLEIRSTESPCTFQKGNGLSECYYFHENCFLMGTIAKACLQGPDLLVQQHFRWVQLRWDGEPMQGLLQRFLRRKLVNKFRGQMPSPCDPVCKTIAWALSVWRQLNSCLARLGTPEALLGPKYFLPCPVVPGHAQATVKWMSKLWNAVIAPRVQEAILSRASVKRQPGFGQTTTKKHPSQGQQAVVKAALSILLNKAVLHGCPLPRAELDQHTADFKGGSFPLSLVSNYNSCSKKKESGAWRKVNTSPRRKSGRFSSPTWNKPDLSNEGIKNKTISQLNCNKNASLSKQKSLENDLSLMLNLDQSLSLGSDDEADLVRELQSMCSSKSESDISKIADSRDDLRTFDSSGNNPAFSATANNPRMPVSQKEVSPLSSHQTTECSNNKSKTEPGVSRVKSFLPVPRSKVTQCSQNTKRSSSSSNTRQIEINNNSKEENWNLHKNEHIEKLNK</sequence>
<name>CTTB2_EULMM</name>
<protein>
    <recommendedName>
        <fullName>Cortactin-binding protein 2</fullName>
        <shortName>CortBP2</shortName>
    </recommendedName>
</protein>
<feature type="chain" id="PRO_0000260405" description="Cortactin-binding protein 2">
    <location>
        <begin position="1"/>
        <end position="1653"/>
    </location>
</feature>
<feature type="repeat" description="ANK 1">
    <location>
        <begin position="700"/>
        <end position="730"/>
    </location>
</feature>
<feature type="repeat" description="ANK 2">
    <location>
        <begin position="734"/>
        <end position="763"/>
    </location>
</feature>
<feature type="repeat" description="ANK 3">
    <location>
        <begin position="767"/>
        <end position="796"/>
    </location>
</feature>
<feature type="repeat" description="ANK 4">
    <location>
        <begin position="800"/>
        <end position="829"/>
    </location>
</feature>
<feature type="repeat" description="ANK 5">
    <location>
        <begin position="833"/>
        <end position="862"/>
    </location>
</feature>
<feature type="repeat" description="ANK 6">
    <location>
        <begin position="903"/>
        <end position="933"/>
    </location>
</feature>
<feature type="region of interest" description="Disordered" evidence="5">
    <location>
        <begin position="1"/>
        <end position="27"/>
    </location>
</feature>
<feature type="region of interest" description="Disordered" evidence="5">
    <location>
        <begin position="203"/>
        <end position="222"/>
    </location>
</feature>
<feature type="region of interest" description="Disordered" evidence="5">
    <location>
        <begin position="268"/>
        <end position="297"/>
    </location>
</feature>
<feature type="region of interest" description="Disordered" evidence="5">
    <location>
        <begin position="314"/>
        <end position="339"/>
    </location>
</feature>
<feature type="region of interest" description="Disordered" evidence="5">
    <location>
        <begin position="356"/>
        <end position="609"/>
    </location>
</feature>
<feature type="region of interest" description="Disordered" evidence="5">
    <location>
        <begin position="860"/>
        <end position="892"/>
    </location>
</feature>
<feature type="region of interest" description="Disordered" evidence="5">
    <location>
        <begin position="1441"/>
        <end position="1472"/>
    </location>
</feature>
<feature type="region of interest" description="Disordered" evidence="5">
    <location>
        <begin position="1545"/>
        <end position="1653"/>
    </location>
</feature>
<feature type="coiled-coil region" evidence="4">
    <location>
        <begin position="119"/>
        <end position="276"/>
    </location>
</feature>
<feature type="compositionally biased region" description="Polar residues" evidence="5">
    <location>
        <begin position="379"/>
        <end position="389"/>
    </location>
</feature>
<feature type="compositionally biased region" description="Low complexity" evidence="5">
    <location>
        <begin position="390"/>
        <end position="408"/>
    </location>
</feature>
<feature type="compositionally biased region" description="Polar residues" evidence="5">
    <location>
        <begin position="444"/>
        <end position="470"/>
    </location>
</feature>
<feature type="compositionally biased region" description="Polar residues" evidence="5">
    <location>
        <begin position="478"/>
        <end position="490"/>
    </location>
</feature>
<feature type="compositionally biased region" description="Polar residues" evidence="5">
    <location>
        <begin position="573"/>
        <end position="584"/>
    </location>
</feature>
<feature type="compositionally biased region" description="Acidic residues" evidence="5">
    <location>
        <begin position="866"/>
        <end position="883"/>
    </location>
</feature>
<feature type="compositionally biased region" description="Polar residues" evidence="5">
    <location>
        <begin position="1549"/>
        <end position="1564"/>
    </location>
</feature>
<feature type="compositionally biased region" description="Polar residues" evidence="5">
    <location>
        <begin position="1572"/>
        <end position="1589"/>
    </location>
</feature>
<feature type="compositionally biased region" description="Low complexity" evidence="5">
    <location>
        <begin position="1614"/>
        <end position="1628"/>
    </location>
</feature>
<feature type="compositionally biased region" description="Basic and acidic residues" evidence="5">
    <location>
        <begin position="1635"/>
        <end position="1653"/>
    </location>
</feature>
<feature type="modified residue" description="Asymmetric dimethylarginine" evidence="1">
    <location>
        <position position="488"/>
    </location>
</feature>
<feature type="modified residue" description="Phosphoserine" evidence="3">
    <location>
        <position position="1514"/>
    </location>
</feature>
<evidence type="ECO:0000250" key="1">
    <source>
        <dbReference type="UniProtKB" id="B9EJA2"/>
    </source>
</evidence>
<evidence type="ECO:0000250" key="2">
    <source>
        <dbReference type="UniProtKB" id="Q2IBD4"/>
    </source>
</evidence>
<evidence type="ECO:0000250" key="3">
    <source>
        <dbReference type="UniProtKB" id="Q8WZ74"/>
    </source>
</evidence>
<evidence type="ECO:0000255" key="4"/>
<evidence type="ECO:0000256" key="5">
    <source>
        <dbReference type="SAM" id="MobiDB-lite"/>
    </source>
</evidence>
<keyword id="KW-0040">ANK repeat</keyword>
<keyword id="KW-0966">Cell projection</keyword>
<keyword id="KW-0175">Coiled coil</keyword>
<keyword id="KW-0963">Cytoplasm</keyword>
<keyword id="KW-0488">Methylation</keyword>
<keyword id="KW-0597">Phosphoprotein</keyword>
<keyword id="KW-0677">Repeat</keyword>
<keyword id="KW-0770">Synapse</keyword>
<gene>
    <name type="primary">CTTNBP2</name>
    <name type="synonym">CORTBP2</name>
</gene>
<proteinExistence type="inferred from homology"/>
<dbReference type="EMBL" id="DP000024">
    <property type="protein sequence ID" value="ABC87445.1"/>
    <property type="molecule type" value="Genomic_DNA"/>
</dbReference>
<dbReference type="SMR" id="Q2IBF8"/>
<dbReference type="GO" id="GO:0015629">
    <property type="term" value="C:actin cytoskeleton"/>
    <property type="evidence" value="ECO:0007669"/>
    <property type="project" value="TreeGrafter"/>
</dbReference>
<dbReference type="GO" id="GO:0005938">
    <property type="term" value="C:cell cortex"/>
    <property type="evidence" value="ECO:0007669"/>
    <property type="project" value="UniProtKB-SubCell"/>
</dbReference>
<dbReference type="GO" id="GO:0043197">
    <property type="term" value="C:dendritic spine"/>
    <property type="evidence" value="ECO:0000250"/>
    <property type="project" value="UniProtKB"/>
</dbReference>
<dbReference type="GO" id="GO:0090443">
    <property type="term" value="C:FAR/SIN/STRIPAK complex"/>
    <property type="evidence" value="ECO:0000250"/>
    <property type="project" value="UniProtKB"/>
</dbReference>
<dbReference type="GO" id="GO:0051721">
    <property type="term" value="F:protein phosphatase 2A binding"/>
    <property type="evidence" value="ECO:0007669"/>
    <property type="project" value="TreeGrafter"/>
</dbReference>
<dbReference type="Gene3D" id="1.25.40.20">
    <property type="entry name" value="Ankyrin repeat-containing domain"/>
    <property type="match status" value="1"/>
</dbReference>
<dbReference type="InterPro" id="IPR002110">
    <property type="entry name" value="Ankyrin_rpt"/>
</dbReference>
<dbReference type="InterPro" id="IPR036770">
    <property type="entry name" value="Ankyrin_rpt-contain_sf"/>
</dbReference>
<dbReference type="InterPro" id="IPR050719">
    <property type="entry name" value="Cortactin-Actin_Reg"/>
</dbReference>
<dbReference type="InterPro" id="IPR019131">
    <property type="entry name" value="Cortactin-binding_p2_N"/>
</dbReference>
<dbReference type="PANTHER" id="PTHR23166:SF9">
    <property type="entry name" value="CTTNBP2 N-TERMINAL-LIKE PROTEIN"/>
    <property type="match status" value="1"/>
</dbReference>
<dbReference type="PANTHER" id="PTHR23166">
    <property type="entry name" value="FILAMIN/GPBP-INTERACTING PROTEIN"/>
    <property type="match status" value="1"/>
</dbReference>
<dbReference type="Pfam" id="PF25408">
    <property type="entry name" value="AAA_lid_NAV1"/>
    <property type="match status" value="1"/>
</dbReference>
<dbReference type="Pfam" id="PF12796">
    <property type="entry name" value="Ank_2"/>
    <property type="match status" value="2"/>
</dbReference>
<dbReference type="Pfam" id="PF09727">
    <property type="entry name" value="CortBP2"/>
    <property type="match status" value="1"/>
</dbReference>
<dbReference type="SMART" id="SM00248">
    <property type="entry name" value="ANK"/>
    <property type="match status" value="6"/>
</dbReference>
<dbReference type="SUPFAM" id="SSF48403">
    <property type="entry name" value="Ankyrin repeat"/>
    <property type="match status" value="1"/>
</dbReference>
<dbReference type="PROSITE" id="PS50297">
    <property type="entry name" value="ANK_REP_REGION"/>
    <property type="match status" value="1"/>
</dbReference>
<dbReference type="PROSITE" id="PS50088">
    <property type="entry name" value="ANK_REPEAT"/>
    <property type="match status" value="4"/>
</dbReference>
<comment type="function">
    <text evidence="2">Regulates the dendritic spine distribution of CTTN/cortactin in hippocampal neurons, and thus controls dendritic spinogenesis and dendritic spine maintenance. Associates with the striatin-interacting phosphatase and kinase (STRIPAK) core complex to regulate dendritic spine distribution of the STRIPAK complex in hippocampal neurons.</text>
</comment>
<comment type="subunit">
    <text evidence="2">Interacts with CTTN/cortactin SH3 domain. Interacts with STRN, STRN4/zinedin and MOB4/phocein; this interactions mediate the association with the STRIPAK core complex and may regulate dendritic spine distribution of the STRIPAK complex in hippocampal neurons. Activation of glutamate receptors weakens the interaction with STRN and STRN4.</text>
</comment>
<comment type="subcellular location">
    <subcellularLocation>
        <location evidence="1">Cytoplasm</location>
        <location evidence="1">Cell cortex</location>
    </subcellularLocation>
    <subcellularLocation>
        <location evidence="2">Cell projection</location>
        <location evidence="2">Dendritic spine</location>
    </subcellularLocation>
    <text evidence="2">Remains associated with dendritic spines even after glutamate stimulation.</text>
</comment>